<keyword id="KW-0488">Methylation</keyword>
<keyword id="KW-0687">Ribonucleoprotein</keyword>
<keyword id="KW-0689">Ribosomal protein</keyword>
<keyword id="KW-0694">RNA-binding</keyword>
<keyword id="KW-0699">rRNA-binding</keyword>
<organism>
    <name type="scientific">Methylorubrum populi (strain ATCC BAA-705 / NCIMB 13946 / BJ001)</name>
    <name type="common">Methylobacterium populi</name>
    <dbReference type="NCBI Taxonomy" id="441620"/>
    <lineage>
        <taxon>Bacteria</taxon>
        <taxon>Pseudomonadati</taxon>
        <taxon>Pseudomonadota</taxon>
        <taxon>Alphaproteobacteria</taxon>
        <taxon>Hyphomicrobiales</taxon>
        <taxon>Methylobacteriaceae</taxon>
        <taxon>Methylorubrum</taxon>
    </lineage>
</organism>
<proteinExistence type="inferred from homology"/>
<gene>
    <name evidence="1" type="primary">rplK</name>
    <name type="ordered locus">Mpop_4479</name>
</gene>
<sequence length="149" mass="15774">MAKKITGYVKLQVPAGAANPSPPIGPALGQRGLNIMEFCKAFNAKTAQMEKGTPIPVIITAYQDRSFTFEMKQPPVTFFLKKAVGLKIGKKPASGSKTPGKGPTVGKITEAQLREIAEKKMPDLNCDSVDAAVAMIRGSARAMGLEVVA</sequence>
<dbReference type="EMBL" id="CP001029">
    <property type="protein sequence ID" value="ACB82578.1"/>
    <property type="molecule type" value="Genomic_DNA"/>
</dbReference>
<dbReference type="RefSeq" id="WP_003597508.1">
    <property type="nucleotide sequence ID" value="NC_010725.1"/>
</dbReference>
<dbReference type="SMR" id="B1ZFW9"/>
<dbReference type="STRING" id="441620.Mpop_4479"/>
<dbReference type="GeneID" id="72991716"/>
<dbReference type="KEGG" id="mpo:Mpop_4479"/>
<dbReference type="eggNOG" id="COG0080">
    <property type="taxonomic scope" value="Bacteria"/>
</dbReference>
<dbReference type="HOGENOM" id="CLU_074237_2_0_5"/>
<dbReference type="OrthoDB" id="9802408at2"/>
<dbReference type="Proteomes" id="UP000007136">
    <property type="component" value="Chromosome"/>
</dbReference>
<dbReference type="GO" id="GO:0022625">
    <property type="term" value="C:cytosolic large ribosomal subunit"/>
    <property type="evidence" value="ECO:0007669"/>
    <property type="project" value="TreeGrafter"/>
</dbReference>
<dbReference type="GO" id="GO:0070180">
    <property type="term" value="F:large ribosomal subunit rRNA binding"/>
    <property type="evidence" value="ECO:0007669"/>
    <property type="project" value="UniProtKB-UniRule"/>
</dbReference>
<dbReference type="GO" id="GO:0003735">
    <property type="term" value="F:structural constituent of ribosome"/>
    <property type="evidence" value="ECO:0007669"/>
    <property type="project" value="InterPro"/>
</dbReference>
<dbReference type="GO" id="GO:0006412">
    <property type="term" value="P:translation"/>
    <property type="evidence" value="ECO:0007669"/>
    <property type="project" value="UniProtKB-UniRule"/>
</dbReference>
<dbReference type="CDD" id="cd00349">
    <property type="entry name" value="Ribosomal_L11"/>
    <property type="match status" value="1"/>
</dbReference>
<dbReference type="FunFam" id="3.30.1550.10:FF:000001">
    <property type="entry name" value="50S ribosomal protein L11"/>
    <property type="match status" value="1"/>
</dbReference>
<dbReference type="Gene3D" id="1.10.10.250">
    <property type="entry name" value="Ribosomal protein L11, C-terminal domain"/>
    <property type="match status" value="1"/>
</dbReference>
<dbReference type="Gene3D" id="3.30.1550.10">
    <property type="entry name" value="Ribosomal protein L11/L12, N-terminal domain"/>
    <property type="match status" value="1"/>
</dbReference>
<dbReference type="HAMAP" id="MF_00736">
    <property type="entry name" value="Ribosomal_uL11"/>
    <property type="match status" value="1"/>
</dbReference>
<dbReference type="InterPro" id="IPR000911">
    <property type="entry name" value="Ribosomal_uL11"/>
</dbReference>
<dbReference type="InterPro" id="IPR006519">
    <property type="entry name" value="Ribosomal_uL11_bac-typ"/>
</dbReference>
<dbReference type="InterPro" id="IPR020783">
    <property type="entry name" value="Ribosomal_uL11_C"/>
</dbReference>
<dbReference type="InterPro" id="IPR036769">
    <property type="entry name" value="Ribosomal_uL11_C_sf"/>
</dbReference>
<dbReference type="InterPro" id="IPR020784">
    <property type="entry name" value="Ribosomal_uL11_N"/>
</dbReference>
<dbReference type="InterPro" id="IPR036796">
    <property type="entry name" value="Ribosomal_uL11_N_sf"/>
</dbReference>
<dbReference type="NCBIfam" id="TIGR01632">
    <property type="entry name" value="L11_bact"/>
    <property type="match status" value="1"/>
</dbReference>
<dbReference type="PANTHER" id="PTHR11661">
    <property type="entry name" value="60S RIBOSOMAL PROTEIN L12"/>
    <property type="match status" value="1"/>
</dbReference>
<dbReference type="PANTHER" id="PTHR11661:SF1">
    <property type="entry name" value="LARGE RIBOSOMAL SUBUNIT PROTEIN UL11M"/>
    <property type="match status" value="1"/>
</dbReference>
<dbReference type="Pfam" id="PF00298">
    <property type="entry name" value="Ribosomal_L11"/>
    <property type="match status" value="1"/>
</dbReference>
<dbReference type="Pfam" id="PF03946">
    <property type="entry name" value="Ribosomal_L11_N"/>
    <property type="match status" value="1"/>
</dbReference>
<dbReference type="SMART" id="SM00649">
    <property type="entry name" value="RL11"/>
    <property type="match status" value="1"/>
</dbReference>
<dbReference type="SUPFAM" id="SSF54747">
    <property type="entry name" value="Ribosomal L11/L12e N-terminal domain"/>
    <property type="match status" value="1"/>
</dbReference>
<dbReference type="SUPFAM" id="SSF46906">
    <property type="entry name" value="Ribosomal protein L11, C-terminal domain"/>
    <property type="match status" value="1"/>
</dbReference>
<reference key="1">
    <citation type="submission" date="2008-04" db="EMBL/GenBank/DDBJ databases">
        <title>Complete sequence of chromosome of Methylobacterium populi BJ001.</title>
        <authorList>
            <consortium name="US DOE Joint Genome Institute"/>
            <person name="Copeland A."/>
            <person name="Lucas S."/>
            <person name="Lapidus A."/>
            <person name="Glavina del Rio T."/>
            <person name="Dalin E."/>
            <person name="Tice H."/>
            <person name="Bruce D."/>
            <person name="Goodwin L."/>
            <person name="Pitluck S."/>
            <person name="Chertkov O."/>
            <person name="Brettin T."/>
            <person name="Detter J.C."/>
            <person name="Han C."/>
            <person name="Kuske C.R."/>
            <person name="Schmutz J."/>
            <person name="Larimer F."/>
            <person name="Land M."/>
            <person name="Hauser L."/>
            <person name="Kyrpides N."/>
            <person name="Mikhailova N."/>
            <person name="Marx C."/>
            <person name="Richardson P."/>
        </authorList>
    </citation>
    <scope>NUCLEOTIDE SEQUENCE [LARGE SCALE GENOMIC DNA]</scope>
    <source>
        <strain>ATCC BAA-705 / NCIMB 13946 / BJ001</strain>
    </source>
</reference>
<accession>B1ZFW9</accession>
<comment type="function">
    <text evidence="1">Forms part of the ribosomal stalk which helps the ribosome interact with GTP-bound translation factors.</text>
</comment>
<comment type="subunit">
    <text evidence="1">Part of the ribosomal stalk of the 50S ribosomal subunit. Interacts with L10 and the large rRNA to form the base of the stalk. L10 forms an elongated spine to which L12 dimers bind in a sequential fashion forming a multimeric L10(L12)X complex.</text>
</comment>
<comment type="PTM">
    <text evidence="1">One or more lysine residues are methylated.</text>
</comment>
<comment type="similarity">
    <text evidence="1">Belongs to the universal ribosomal protein uL11 family.</text>
</comment>
<protein>
    <recommendedName>
        <fullName evidence="1">Large ribosomal subunit protein uL11</fullName>
    </recommendedName>
    <alternativeName>
        <fullName evidence="2">50S ribosomal protein L11</fullName>
    </alternativeName>
</protein>
<name>RL11_METPB</name>
<feature type="chain" id="PRO_1000195669" description="Large ribosomal subunit protein uL11">
    <location>
        <begin position="1"/>
        <end position="149"/>
    </location>
</feature>
<evidence type="ECO:0000255" key="1">
    <source>
        <dbReference type="HAMAP-Rule" id="MF_00736"/>
    </source>
</evidence>
<evidence type="ECO:0000305" key="2"/>